<organism>
    <name type="scientific">Escherichia coli O6:H1 (strain CFT073 / ATCC 700928 / UPEC)</name>
    <dbReference type="NCBI Taxonomy" id="199310"/>
    <lineage>
        <taxon>Bacteria</taxon>
        <taxon>Pseudomonadati</taxon>
        <taxon>Pseudomonadota</taxon>
        <taxon>Gammaproteobacteria</taxon>
        <taxon>Enterobacterales</taxon>
        <taxon>Enterobacteriaceae</taxon>
        <taxon>Escherichia</taxon>
    </lineage>
</organism>
<accession>Q8CW65</accession>
<name>YCDX_ECOL6</name>
<keyword id="KW-0378">Hydrolase</keyword>
<keyword id="KW-0479">Metal-binding</keyword>
<keyword id="KW-1185">Reference proteome</keyword>
<keyword id="KW-0862">Zinc</keyword>
<protein>
    <recommendedName>
        <fullName evidence="1">Probable phosphatase YcdX</fullName>
        <ecNumber evidence="1">3.1.3.-</ecNumber>
    </recommendedName>
</protein>
<feature type="chain" id="PRO_0000228693" description="Probable phosphatase YcdX">
    <location>
        <begin position="1"/>
        <end position="245"/>
    </location>
</feature>
<feature type="binding site" evidence="1">
    <location>
        <position position="7"/>
    </location>
    <ligand>
        <name>Zn(2+)</name>
        <dbReference type="ChEBI" id="CHEBI:29105"/>
        <label>1</label>
    </ligand>
</feature>
<feature type="binding site" evidence="1">
    <location>
        <position position="9"/>
    </location>
    <ligand>
        <name>Zn(2+)</name>
        <dbReference type="ChEBI" id="CHEBI:29105"/>
        <label>1</label>
    </ligand>
</feature>
<feature type="binding site" evidence="1">
    <location>
        <position position="15"/>
    </location>
    <ligand>
        <name>Zn(2+)</name>
        <dbReference type="ChEBI" id="CHEBI:29105"/>
        <label>2</label>
    </ligand>
</feature>
<feature type="binding site" evidence="1">
    <location>
        <position position="40"/>
    </location>
    <ligand>
        <name>Zn(2+)</name>
        <dbReference type="ChEBI" id="CHEBI:29105"/>
        <label>2</label>
    </ligand>
</feature>
<feature type="binding site" evidence="1">
    <location>
        <position position="73"/>
    </location>
    <ligand>
        <name>Zn(2+)</name>
        <dbReference type="ChEBI" id="CHEBI:29105"/>
        <label>1</label>
    </ligand>
</feature>
<feature type="binding site" evidence="1">
    <location>
        <position position="73"/>
    </location>
    <ligand>
        <name>Zn(2+)</name>
        <dbReference type="ChEBI" id="CHEBI:29105"/>
        <label>3</label>
    </ligand>
</feature>
<feature type="binding site" evidence="1">
    <location>
        <position position="101"/>
    </location>
    <ligand>
        <name>Zn(2+)</name>
        <dbReference type="ChEBI" id="CHEBI:29105"/>
        <label>3</label>
    </ligand>
</feature>
<feature type="binding site" evidence="1">
    <location>
        <position position="131"/>
    </location>
    <ligand>
        <name>Zn(2+)</name>
        <dbReference type="ChEBI" id="CHEBI:29105"/>
        <label>3</label>
    </ligand>
</feature>
<feature type="binding site" evidence="1">
    <location>
        <position position="192"/>
    </location>
    <ligand>
        <name>Zn(2+)</name>
        <dbReference type="ChEBI" id="CHEBI:29105"/>
        <label>1</label>
    </ligand>
</feature>
<feature type="binding site" evidence="1">
    <location>
        <position position="194"/>
    </location>
    <ligand>
        <name>Zn(2+)</name>
        <dbReference type="ChEBI" id="CHEBI:29105"/>
        <label>2</label>
    </ligand>
</feature>
<gene>
    <name evidence="1" type="primary">ycdX</name>
    <name type="ordered locus">c1296</name>
</gene>
<dbReference type="EC" id="3.1.3.-" evidence="1"/>
<dbReference type="EMBL" id="AE014075">
    <property type="protein sequence ID" value="AAN79769.1"/>
    <property type="molecule type" value="Genomic_DNA"/>
</dbReference>
<dbReference type="PIR" id="C90805">
    <property type="entry name" value="C90805"/>
</dbReference>
<dbReference type="PIR" id="H85664">
    <property type="entry name" value="H85664"/>
</dbReference>
<dbReference type="RefSeq" id="WP_000283664.1">
    <property type="nucleotide sequence ID" value="NZ_CP051263.1"/>
</dbReference>
<dbReference type="SMR" id="Q8CW65"/>
<dbReference type="STRING" id="199310.c1296"/>
<dbReference type="GeneID" id="93776384"/>
<dbReference type="KEGG" id="ecc:c1296"/>
<dbReference type="eggNOG" id="COG1387">
    <property type="taxonomic scope" value="Bacteria"/>
</dbReference>
<dbReference type="HOGENOM" id="CLU_061999_0_1_6"/>
<dbReference type="BioCyc" id="ECOL199310:C1296-MONOMER"/>
<dbReference type="Proteomes" id="UP000001410">
    <property type="component" value="Chromosome"/>
</dbReference>
<dbReference type="GO" id="GO:0005829">
    <property type="term" value="C:cytosol"/>
    <property type="evidence" value="ECO:0007669"/>
    <property type="project" value="TreeGrafter"/>
</dbReference>
<dbReference type="GO" id="GO:0016791">
    <property type="term" value="F:phosphatase activity"/>
    <property type="evidence" value="ECO:0007669"/>
    <property type="project" value="UniProtKB-UniRule"/>
</dbReference>
<dbReference type="GO" id="GO:0008270">
    <property type="term" value="F:zinc ion binding"/>
    <property type="evidence" value="ECO:0007669"/>
    <property type="project" value="UniProtKB-UniRule"/>
</dbReference>
<dbReference type="GO" id="GO:0071978">
    <property type="term" value="P:bacterial-type flagellum-dependent swarming motility"/>
    <property type="evidence" value="ECO:0007669"/>
    <property type="project" value="TreeGrafter"/>
</dbReference>
<dbReference type="CDD" id="cd07437">
    <property type="entry name" value="PHP_HisPPase_Ycdx_like"/>
    <property type="match status" value="1"/>
</dbReference>
<dbReference type="FunFam" id="3.20.20.140:FF:000008">
    <property type="entry name" value="Probable phosphatase YcdX"/>
    <property type="match status" value="1"/>
</dbReference>
<dbReference type="Gene3D" id="3.20.20.140">
    <property type="entry name" value="Metal-dependent hydrolases"/>
    <property type="match status" value="1"/>
</dbReference>
<dbReference type="HAMAP" id="MF_01561">
    <property type="entry name" value="YcdX_phosphat"/>
    <property type="match status" value="1"/>
</dbReference>
<dbReference type="InterPro" id="IPR023710">
    <property type="entry name" value="Phosphatase_YcdX_put"/>
</dbReference>
<dbReference type="InterPro" id="IPR004013">
    <property type="entry name" value="PHP_dom"/>
</dbReference>
<dbReference type="InterPro" id="IPR050243">
    <property type="entry name" value="PHP_phosphatase"/>
</dbReference>
<dbReference type="InterPro" id="IPR003141">
    <property type="entry name" value="Pol/His_phosphatase_N"/>
</dbReference>
<dbReference type="InterPro" id="IPR016195">
    <property type="entry name" value="Pol/histidinol_Pase-like"/>
</dbReference>
<dbReference type="NCBIfam" id="NF006702">
    <property type="entry name" value="PRK09248.1"/>
    <property type="match status" value="1"/>
</dbReference>
<dbReference type="PANTHER" id="PTHR36928">
    <property type="entry name" value="PHOSPHATASE YCDX-RELATED"/>
    <property type="match status" value="1"/>
</dbReference>
<dbReference type="PANTHER" id="PTHR36928:SF1">
    <property type="entry name" value="PHOSPHATASE YCDX-RELATED"/>
    <property type="match status" value="1"/>
</dbReference>
<dbReference type="Pfam" id="PF02811">
    <property type="entry name" value="PHP"/>
    <property type="match status" value="1"/>
</dbReference>
<dbReference type="SMART" id="SM00481">
    <property type="entry name" value="POLIIIAc"/>
    <property type="match status" value="1"/>
</dbReference>
<dbReference type="SUPFAM" id="SSF89550">
    <property type="entry name" value="PHP domain-like"/>
    <property type="match status" value="1"/>
</dbReference>
<evidence type="ECO:0000255" key="1">
    <source>
        <dbReference type="HAMAP-Rule" id="MF_01561"/>
    </source>
</evidence>
<comment type="cofactor">
    <cofactor evidence="1">
        <name>Zn(2+)</name>
        <dbReference type="ChEBI" id="CHEBI:29105"/>
    </cofactor>
    <text evidence="1">Binds 3 Zn(2+) ions per subunit.</text>
</comment>
<comment type="subunit">
    <text evidence="1">Homotrimer.</text>
</comment>
<comment type="similarity">
    <text evidence="1">Belongs to the PHP family.</text>
</comment>
<reference key="1">
    <citation type="journal article" date="2002" name="Proc. Natl. Acad. Sci. U.S.A.">
        <title>Extensive mosaic structure revealed by the complete genome sequence of uropathogenic Escherichia coli.</title>
        <authorList>
            <person name="Welch R.A."/>
            <person name="Burland V."/>
            <person name="Plunkett G. III"/>
            <person name="Redford P."/>
            <person name="Roesch P."/>
            <person name="Rasko D."/>
            <person name="Buckles E.L."/>
            <person name="Liou S.-R."/>
            <person name="Boutin A."/>
            <person name="Hackett J."/>
            <person name="Stroud D."/>
            <person name="Mayhew G.F."/>
            <person name="Rose D.J."/>
            <person name="Zhou S."/>
            <person name="Schwartz D.C."/>
            <person name="Perna N.T."/>
            <person name="Mobley H.L.T."/>
            <person name="Donnenberg M.S."/>
            <person name="Blattner F.R."/>
        </authorList>
    </citation>
    <scope>NUCLEOTIDE SEQUENCE [LARGE SCALE GENOMIC DNA]</scope>
    <source>
        <strain>CFT073 / ATCC 700928 / UPEC</strain>
    </source>
</reference>
<sequence length="245" mass="26832">MYPVDLHMHTVASTHAYSTLSDYIAQAKQKGIKLFAITDHGPDMEDAPHHWHFINMRIWPRVVDGVGILRGIEANIKNVDGEIDCSGKMFDSLDLIIAGFHEPVFAPHDKATNTQAMIATIASGNVHIISHPGNPKYEIDVKAVAEAAAKHQVALEINNSSFLHSRKGSEDNCRAVAAAVRDAGGWVALGSDSHTAFTMGEFEECLKILDAVDFPPERILNVSPRRLLNFLESRGMAPIAEFADL</sequence>
<proteinExistence type="inferred from homology"/>